<name>NUOB_BRUA1</name>
<keyword id="KW-0004">4Fe-4S</keyword>
<keyword id="KW-0997">Cell inner membrane</keyword>
<keyword id="KW-1003">Cell membrane</keyword>
<keyword id="KW-0408">Iron</keyword>
<keyword id="KW-0411">Iron-sulfur</keyword>
<keyword id="KW-0472">Membrane</keyword>
<keyword id="KW-0479">Metal-binding</keyword>
<keyword id="KW-0520">NAD</keyword>
<keyword id="KW-0874">Quinone</keyword>
<keyword id="KW-1278">Translocase</keyword>
<keyword id="KW-0813">Transport</keyword>
<keyword id="KW-0830">Ubiquinone</keyword>
<gene>
    <name evidence="2" type="primary">nuoB</name>
    <name type="ordered locus">BAbS19_I07670</name>
</gene>
<proteinExistence type="inferred from homology"/>
<evidence type="ECO:0000250" key="1"/>
<evidence type="ECO:0000255" key="2">
    <source>
        <dbReference type="HAMAP-Rule" id="MF_01356"/>
    </source>
</evidence>
<accession>B2S544</accession>
<comment type="function">
    <text evidence="1">NDH-1 shuttles electrons from NADH, via FMN and iron-sulfur (Fe-S) centers, to quinones in the respiratory chain. Couples the redox reaction to proton translocation (for every two electrons transferred, four hydrogen ions are translocated across the cytoplasmic membrane), and thus conserves the redox energy in a proton gradient (By similarity).</text>
</comment>
<comment type="catalytic activity">
    <reaction evidence="2">
        <text>a quinone + NADH + 5 H(+)(in) = a quinol + NAD(+) + 4 H(+)(out)</text>
        <dbReference type="Rhea" id="RHEA:57888"/>
        <dbReference type="ChEBI" id="CHEBI:15378"/>
        <dbReference type="ChEBI" id="CHEBI:24646"/>
        <dbReference type="ChEBI" id="CHEBI:57540"/>
        <dbReference type="ChEBI" id="CHEBI:57945"/>
        <dbReference type="ChEBI" id="CHEBI:132124"/>
    </reaction>
</comment>
<comment type="cofactor">
    <cofactor evidence="2">
        <name>[4Fe-4S] cluster</name>
        <dbReference type="ChEBI" id="CHEBI:49883"/>
    </cofactor>
    <text evidence="2">Binds 1 [4Fe-4S] cluster.</text>
</comment>
<comment type="subunit">
    <text evidence="2">NDH-1 is composed of 14 different subunits. Subunits NuoB, C, D, E, F, and G constitute the peripheral sector of the complex.</text>
</comment>
<comment type="subcellular location">
    <subcellularLocation>
        <location evidence="2">Cell inner membrane</location>
        <topology evidence="2">Peripheral membrane protein</topology>
        <orientation evidence="2">Cytoplasmic side</orientation>
    </subcellularLocation>
</comment>
<comment type="similarity">
    <text evidence="2">Belongs to the complex I 20 kDa subunit family.</text>
</comment>
<protein>
    <recommendedName>
        <fullName evidence="2">NADH-quinone oxidoreductase subunit B</fullName>
        <ecNumber evidence="2">7.1.1.-</ecNumber>
    </recommendedName>
    <alternativeName>
        <fullName evidence="2">NADH dehydrogenase I subunit B</fullName>
    </alternativeName>
    <alternativeName>
        <fullName evidence="2">NDH-1 subunit B</fullName>
    </alternativeName>
</protein>
<feature type="chain" id="PRO_0000358357" description="NADH-quinone oxidoreductase subunit B">
    <location>
        <begin position="1"/>
        <end position="193"/>
    </location>
</feature>
<feature type="binding site" evidence="2">
    <location>
        <position position="72"/>
    </location>
    <ligand>
        <name>[4Fe-4S] cluster</name>
        <dbReference type="ChEBI" id="CHEBI:49883"/>
    </ligand>
</feature>
<feature type="binding site" evidence="2">
    <location>
        <position position="73"/>
    </location>
    <ligand>
        <name>[4Fe-4S] cluster</name>
        <dbReference type="ChEBI" id="CHEBI:49883"/>
    </ligand>
</feature>
<feature type="binding site" evidence="2">
    <location>
        <position position="137"/>
    </location>
    <ligand>
        <name>[4Fe-4S] cluster</name>
        <dbReference type="ChEBI" id="CHEBI:49883"/>
    </ligand>
</feature>
<feature type="binding site" evidence="2">
    <location>
        <position position="167"/>
    </location>
    <ligand>
        <name>[4Fe-4S] cluster</name>
        <dbReference type="ChEBI" id="CHEBI:49883"/>
    </ligand>
</feature>
<reference key="1">
    <citation type="journal article" date="2008" name="PLoS ONE">
        <title>Genome sequence of Brucella abortus vaccine strain S19 compared to virulent strains yields candidate virulence genes.</title>
        <authorList>
            <person name="Crasta O.R."/>
            <person name="Folkerts O."/>
            <person name="Fei Z."/>
            <person name="Mane S.P."/>
            <person name="Evans C."/>
            <person name="Martino-Catt S."/>
            <person name="Bricker B."/>
            <person name="Yu G."/>
            <person name="Du L."/>
            <person name="Sobral B.W."/>
        </authorList>
    </citation>
    <scope>NUCLEOTIDE SEQUENCE [LARGE SCALE GENOMIC DNA]</scope>
    <source>
        <strain>S19</strain>
    </source>
</reference>
<sequence>MGLTGTNTTLVAPQPKGILDPRTGKTVGSDDAFFNDLNGELSDKGFIVTSADALITWARTGSLMWMTFGLACCAVEMMHISMPRYDAERFGIAPRASPRQSDVMIVAGTLTNKMAPALRKVYDQMPEPRYVISMGSCANGGGYYHYSYSVVRGCDRVVPVDIYVPGCPPTAEALLYGILLLQKKIRRTGTIER</sequence>
<organism>
    <name type="scientific">Brucella abortus (strain S19)</name>
    <dbReference type="NCBI Taxonomy" id="430066"/>
    <lineage>
        <taxon>Bacteria</taxon>
        <taxon>Pseudomonadati</taxon>
        <taxon>Pseudomonadota</taxon>
        <taxon>Alphaproteobacteria</taxon>
        <taxon>Hyphomicrobiales</taxon>
        <taxon>Brucellaceae</taxon>
        <taxon>Brucella/Ochrobactrum group</taxon>
        <taxon>Brucella</taxon>
    </lineage>
</organism>
<dbReference type="EC" id="7.1.1.-" evidence="2"/>
<dbReference type="EMBL" id="CP000887">
    <property type="protein sequence ID" value="ACD72291.1"/>
    <property type="molecule type" value="Genomic_DNA"/>
</dbReference>
<dbReference type="RefSeq" id="WP_002963938.1">
    <property type="nucleotide sequence ID" value="NC_010742.1"/>
</dbReference>
<dbReference type="SMR" id="B2S544"/>
<dbReference type="KEGG" id="bmc:BAbS19_I07670"/>
<dbReference type="HOGENOM" id="CLU_055737_7_3_5"/>
<dbReference type="Proteomes" id="UP000002565">
    <property type="component" value="Chromosome 1"/>
</dbReference>
<dbReference type="GO" id="GO:0005886">
    <property type="term" value="C:plasma membrane"/>
    <property type="evidence" value="ECO:0007669"/>
    <property type="project" value="UniProtKB-SubCell"/>
</dbReference>
<dbReference type="GO" id="GO:0045271">
    <property type="term" value="C:respiratory chain complex I"/>
    <property type="evidence" value="ECO:0007669"/>
    <property type="project" value="TreeGrafter"/>
</dbReference>
<dbReference type="GO" id="GO:0051539">
    <property type="term" value="F:4 iron, 4 sulfur cluster binding"/>
    <property type="evidence" value="ECO:0007669"/>
    <property type="project" value="UniProtKB-KW"/>
</dbReference>
<dbReference type="GO" id="GO:0005506">
    <property type="term" value="F:iron ion binding"/>
    <property type="evidence" value="ECO:0007669"/>
    <property type="project" value="UniProtKB-UniRule"/>
</dbReference>
<dbReference type="GO" id="GO:0008137">
    <property type="term" value="F:NADH dehydrogenase (ubiquinone) activity"/>
    <property type="evidence" value="ECO:0007669"/>
    <property type="project" value="InterPro"/>
</dbReference>
<dbReference type="GO" id="GO:0050136">
    <property type="term" value="F:NADH:ubiquinone reductase (non-electrogenic) activity"/>
    <property type="evidence" value="ECO:0007669"/>
    <property type="project" value="UniProtKB-UniRule"/>
</dbReference>
<dbReference type="GO" id="GO:0048038">
    <property type="term" value="F:quinone binding"/>
    <property type="evidence" value="ECO:0007669"/>
    <property type="project" value="UniProtKB-KW"/>
</dbReference>
<dbReference type="GO" id="GO:0009060">
    <property type="term" value="P:aerobic respiration"/>
    <property type="evidence" value="ECO:0007669"/>
    <property type="project" value="TreeGrafter"/>
</dbReference>
<dbReference type="GO" id="GO:0015990">
    <property type="term" value="P:electron transport coupled proton transport"/>
    <property type="evidence" value="ECO:0007669"/>
    <property type="project" value="TreeGrafter"/>
</dbReference>
<dbReference type="FunFam" id="3.40.50.12280:FF:000001">
    <property type="entry name" value="NADH-quinone oxidoreductase subunit B 2"/>
    <property type="match status" value="1"/>
</dbReference>
<dbReference type="Gene3D" id="3.40.50.12280">
    <property type="match status" value="1"/>
</dbReference>
<dbReference type="HAMAP" id="MF_01356">
    <property type="entry name" value="NDH1_NuoB"/>
    <property type="match status" value="1"/>
</dbReference>
<dbReference type="InterPro" id="IPR006137">
    <property type="entry name" value="NADH_UbQ_OxRdtase-like_20kDa"/>
</dbReference>
<dbReference type="InterPro" id="IPR006138">
    <property type="entry name" value="NADH_UQ_OxRdtase_20Kd_su"/>
</dbReference>
<dbReference type="NCBIfam" id="TIGR01957">
    <property type="entry name" value="nuoB_fam"/>
    <property type="match status" value="1"/>
</dbReference>
<dbReference type="NCBIfam" id="NF005012">
    <property type="entry name" value="PRK06411.1"/>
    <property type="match status" value="1"/>
</dbReference>
<dbReference type="PANTHER" id="PTHR11995">
    <property type="entry name" value="NADH DEHYDROGENASE"/>
    <property type="match status" value="1"/>
</dbReference>
<dbReference type="PANTHER" id="PTHR11995:SF14">
    <property type="entry name" value="NADH DEHYDROGENASE [UBIQUINONE] IRON-SULFUR PROTEIN 7, MITOCHONDRIAL"/>
    <property type="match status" value="1"/>
</dbReference>
<dbReference type="Pfam" id="PF01058">
    <property type="entry name" value="Oxidored_q6"/>
    <property type="match status" value="1"/>
</dbReference>
<dbReference type="SUPFAM" id="SSF56770">
    <property type="entry name" value="HydA/Nqo6-like"/>
    <property type="match status" value="1"/>
</dbReference>
<dbReference type="PROSITE" id="PS01150">
    <property type="entry name" value="COMPLEX1_20K"/>
    <property type="match status" value="1"/>
</dbReference>